<feature type="chain" id="PRO_1000193353" description="DNA repair protein RecO">
    <location>
        <begin position="1"/>
        <end position="245"/>
    </location>
</feature>
<accession>Q2GJY5</accession>
<sequence>MQWQDHGMIVSMTPYGDTRSILSVFTRNHGICNAMIRLNKKKQSLQIGDRVCVTWRARLANNLGYFNSCEIISSAFYAYFQDHSKLLCLSSVTSTIYKSVPTNDAHPILYDYLIEFAEAAECGGHWYNEYLKLELEILSQLGFALDLSRCAVYHCEDNLLYISPKTGRAISERAGVSYRHLLFPLPQILRDLHNGTHTEQCSRKEFLLCLQILGYFLHRHLLSDDSKFLEQRKEMTALIYEEEAF</sequence>
<name>RECO_ANAPZ</name>
<dbReference type="EMBL" id="CP000235">
    <property type="protein sequence ID" value="ABD43584.1"/>
    <property type="molecule type" value="Genomic_DNA"/>
</dbReference>
<dbReference type="RefSeq" id="WP_011450837.1">
    <property type="nucleotide sequence ID" value="NC_007797.1"/>
</dbReference>
<dbReference type="SMR" id="Q2GJY5"/>
<dbReference type="STRING" id="212042.APH_0736"/>
<dbReference type="PaxDb" id="212042-APH_0736"/>
<dbReference type="EnsemblBacteria" id="ABD43584">
    <property type="protein sequence ID" value="ABD43584"/>
    <property type="gene ID" value="APH_0736"/>
</dbReference>
<dbReference type="GeneID" id="92748215"/>
<dbReference type="KEGG" id="aph:APH_0736"/>
<dbReference type="eggNOG" id="COG1381">
    <property type="taxonomic scope" value="Bacteria"/>
</dbReference>
<dbReference type="HOGENOM" id="CLU_086029_0_0_5"/>
<dbReference type="Proteomes" id="UP000001943">
    <property type="component" value="Chromosome"/>
</dbReference>
<dbReference type="GO" id="GO:0043590">
    <property type="term" value="C:bacterial nucleoid"/>
    <property type="evidence" value="ECO:0007669"/>
    <property type="project" value="TreeGrafter"/>
</dbReference>
<dbReference type="GO" id="GO:0006310">
    <property type="term" value="P:DNA recombination"/>
    <property type="evidence" value="ECO:0007669"/>
    <property type="project" value="UniProtKB-UniRule"/>
</dbReference>
<dbReference type="GO" id="GO:0006302">
    <property type="term" value="P:double-strand break repair"/>
    <property type="evidence" value="ECO:0007669"/>
    <property type="project" value="TreeGrafter"/>
</dbReference>
<dbReference type="Gene3D" id="2.40.50.140">
    <property type="entry name" value="Nucleic acid-binding proteins"/>
    <property type="match status" value="1"/>
</dbReference>
<dbReference type="Gene3D" id="1.20.1440.120">
    <property type="entry name" value="Recombination protein O, C-terminal domain"/>
    <property type="match status" value="1"/>
</dbReference>
<dbReference type="HAMAP" id="MF_00201">
    <property type="entry name" value="RecO"/>
    <property type="match status" value="1"/>
</dbReference>
<dbReference type="InterPro" id="IPR037278">
    <property type="entry name" value="ARFGAP/RecO"/>
</dbReference>
<dbReference type="InterPro" id="IPR022572">
    <property type="entry name" value="DNA_rep/recomb_RecO_N"/>
</dbReference>
<dbReference type="InterPro" id="IPR012340">
    <property type="entry name" value="NA-bd_OB-fold"/>
</dbReference>
<dbReference type="InterPro" id="IPR003717">
    <property type="entry name" value="RecO"/>
</dbReference>
<dbReference type="InterPro" id="IPR042242">
    <property type="entry name" value="RecO_C"/>
</dbReference>
<dbReference type="NCBIfam" id="TIGR00613">
    <property type="entry name" value="reco"/>
    <property type="match status" value="1"/>
</dbReference>
<dbReference type="PANTHER" id="PTHR33991">
    <property type="entry name" value="DNA REPAIR PROTEIN RECO"/>
    <property type="match status" value="1"/>
</dbReference>
<dbReference type="PANTHER" id="PTHR33991:SF1">
    <property type="entry name" value="DNA REPAIR PROTEIN RECO"/>
    <property type="match status" value="1"/>
</dbReference>
<dbReference type="Pfam" id="PF02565">
    <property type="entry name" value="RecO_C"/>
    <property type="match status" value="1"/>
</dbReference>
<dbReference type="Pfam" id="PF11967">
    <property type="entry name" value="RecO_N"/>
    <property type="match status" value="1"/>
</dbReference>
<dbReference type="SUPFAM" id="SSF57863">
    <property type="entry name" value="ArfGap/RecO-like zinc finger"/>
    <property type="match status" value="1"/>
</dbReference>
<protein>
    <recommendedName>
        <fullName evidence="1">DNA repair protein RecO</fullName>
    </recommendedName>
    <alternativeName>
        <fullName evidence="1">Recombination protein O</fullName>
    </alternativeName>
</protein>
<reference key="1">
    <citation type="journal article" date="2006" name="PLoS Genet.">
        <title>Comparative genomics of emerging human ehrlichiosis agents.</title>
        <authorList>
            <person name="Dunning Hotopp J.C."/>
            <person name="Lin M."/>
            <person name="Madupu R."/>
            <person name="Crabtree J."/>
            <person name="Angiuoli S.V."/>
            <person name="Eisen J.A."/>
            <person name="Seshadri R."/>
            <person name="Ren Q."/>
            <person name="Wu M."/>
            <person name="Utterback T.R."/>
            <person name="Smith S."/>
            <person name="Lewis M."/>
            <person name="Khouri H."/>
            <person name="Zhang C."/>
            <person name="Niu H."/>
            <person name="Lin Q."/>
            <person name="Ohashi N."/>
            <person name="Zhi N."/>
            <person name="Nelson W.C."/>
            <person name="Brinkac L.M."/>
            <person name="Dodson R.J."/>
            <person name="Rosovitz M.J."/>
            <person name="Sundaram J.P."/>
            <person name="Daugherty S.C."/>
            <person name="Davidsen T."/>
            <person name="Durkin A.S."/>
            <person name="Gwinn M.L."/>
            <person name="Haft D.H."/>
            <person name="Selengut J.D."/>
            <person name="Sullivan S.A."/>
            <person name="Zafar N."/>
            <person name="Zhou L."/>
            <person name="Benahmed F."/>
            <person name="Forberger H."/>
            <person name="Halpin R."/>
            <person name="Mulligan S."/>
            <person name="Robinson J."/>
            <person name="White O."/>
            <person name="Rikihisa Y."/>
            <person name="Tettelin H."/>
        </authorList>
    </citation>
    <scope>NUCLEOTIDE SEQUENCE [LARGE SCALE GENOMIC DNA]</scope>
    <source>
        <strain>HZ</strain>
    </source>
</reference>
<organism>
    <name type="scientific">Anaplasma phagocytophilum (strain HZ)</name>
    <dbReference type="NCBI Taxonomy" id="212042"/>
    <lineage>
        <taxon>Bacteria</taxon>
        <taxon>Pseudomonadati</taxon>
        <taxon>Pseudomonadota</taxon>
        <taxon>Alphaproteobacteria</taxon>
        <taxon>Rickettsiales</taxon>
        <taxon>Anaplasmataceae</taxon>
        <taxon>Anaplasma</taxon>
        <taxon>phagocytophilum group</taxon>
    </lineage>
</organism>
<comment type="function">
    <text evidence="1">Involved in DNA repair and RecF pathway recombination.</text>
</comment>
<comment type="similarity">
    <text evidence="1">Belongs to the RecO family.</text>
</comment>
<proteinExistence type="inferred from homology"/>
<evidence type="ECO:0000255" key="1">
    <source>
        <dbReference type="HAMAP-Rule" id="MF_00201"/>
    </source>
</evidence>
<gene>
    <name evidence="1" type="primary">recO</name>
    <name type="ordered locus">APH_0736</name>
</gene>
<keyword id="KW-0227">DNA damage</keyword>
<keyword id="KW-0233">DNA recombination</keyword>
<keyword id="KW-0234">DNA repair</keyword>